<gene>
    <name evidence="1" type="primary">rplI</name>
    <name type="ordered locus">BP2793</name>
</gene>
<feature type="chain" id="PRO_0000236492" description="Large ribosomal subunit protein bL9">
    <location>
        <begin position="1"/>
        <end position="151"/>
    </location>
</feature>
<dbReference type="EMBL" id="BX640419">
    <property type="protein sequence ID" value="CAE43066.1"/>
    <property type="molecule type" value="Genomic_DNA"/>
</dbReference>
<dbReference type="RefSeq" id="NP_881393.1">
    <property type="nucleotide sequence ID" value="NC_002929.2"/>
</dbReference>
<dbReference type="RefSeq" id="WP_010931135.1">
    <property type="nucleotide sequence ID" value="NZ_CP039022.1"/>
</dbReference>
<dbReference type="SMR" id="Q7VV92"/>
<dbReference type="STRING" id="257313.BP2793"/>
<dbReference type="PaxDb" id="257313-BP2793"/>
<dbReference type="GeneID" id="69602693"/>
<dbReference type="KEGG" id="bpe:BP2793"/>
<dbReference type="PATRIC" id="fig|257313.5.peg.3013"/>
<dbReference type="eggNOG" id="COG0359">
    <property type="taxonomic scope" value="Bacteria"/>
</dbReference>
<dbReference type="HOGENOM" id="CLU_078938_4_1_4"/>
<dbReference type="Proteomes" id="UP000002676">
    <property type="component" value="Chromosome"/>
</dbReference>
<dbReference type="GO" id="GO:1990904">
    <property type="term" value="C:ribonucleoprotein complex"/>
    <property type="evidence" value="ECO:0007669"/>
    <property type="project" value="UniProtKB-KW"/>
</dbReference>
<dbReference type="GO" id="GO:0005840">
    <property type="term" value="C:ribosome"/>
    <property type="evidence" value="ECO:0007669"/>
    <property type="project" value="UniProtKB-KW"/>
</dbReference>
<dbReference type="GO" id="GO:0019843">
    <property type="term" value="F:rRNA binding"/>
    <property type="evidence" value="ECO:0007669"/>
    <property type="project" value="UniProtKB-UniRule"/>
</dbReference>
<dbReference type="GO" id="GO:0003735">
    <property type="term" value="F:structural constituent of ribosome"/>
    <property type="evidence" value="ECO:0007669"/>
    <property type="project" value="InterPro"/>
</dbReference>
<dbReference type="GO" id="GO:0006412">
    <property type="term" value="P:translation"/>
    <property type="evidence" value="ECO:0007669"/>
    <property type="project" value="UniProtKB-UniRule"/>
</dbReference>
<dbReference type="Gene3D" id="3.10.430.100">
    <property type="entry name" value="Ribosomal protein L9, C-terminal domain"/>
    <property type="match status" value="1"/>
</dbReference>
<dbReference type="Gene3D" id="3.40.5.10">
    <property type="entry name" value="Ribosomal protein L9, N-terminal domain"/>
    <property type="match status" value="1"/>
</dbReference>
<dbReference type="HAMAP" id="MF_00503">
    <property type="entry name" value="Ribosomal_bL9"/>
    <property type="match status" value="1"/>
</dbReference>
<dbReference type="InterPro" id="IPR000244">
    <property type="entry name" value="Ribosomal_bL9"/>
</dbReference>
<dbReference type="InterPro" id="IPR009027">
    <property type="entry name" value="Ribosomal_bL9/RNase_H1_N"/>
</dbReference>
<dbReference type="InterPro" id="IPR020594">
    <property type="entry name" value="Ribosomal_bL9_bac/chp"/>
</dbReference>
<dbReference type="InterPro" id="IPR020069">
    <property type="entry name" value="Ribosomal_bL9_C"/>
</dbReference>
<dbReference type="InterPro" id="IPR036791">
    <property type="entry name" value="Ribosomal_bL9_C_sf"/>
</dbReference>
<dbReference type="InterPro" id="IPR020070">
    <property type="entry name" value="Ribosomal_bL9_N"/>
</dbReference>
<dbReference type="InterPro" id="IPR036935">
    <property type="entry name" value="Ribosomal_bL9_N_sf"/>
</dbReference>
<dbReference type="NCBIfam" id="TIGR00158">
    <property type="entry name" value="L9"/>
    <property type="match status" value="1"/>
</dbReference>
<dbReference type="PANTHER" id="PTHR21368">
    <property type="entry name" value="50S RIBOSOMAL PROTEIN L9"/>
    <property type="match status" value="1"/>
</dbReference>
<dbReference type="Pfam" id="PF03948">
    <property type="entry name" value="Ribosomal_L9_C"/>
    <property type="match status" value="1"/>
</dbReference>
<dbReference type="Pfam" id="PF01281">
    <property type="entry name" value="Ribosomal_L9_N"/>
    <property type="match status" value="1"/>
</dbReference>
<dbReference type="SUPFAM" id="SSF55658">
    <property type="entry name" value="L9 N-domain-like"/>
    <property type="match status" value="1"/>
</dbReference>
<dbReference type="SUPFAM" id="SSF55653">
    <property type="entry name" value="Ribosomal protein L9 C-domain"/>
    <property type="match status" value="1"/>
</dbReference>
<dbReference type="PROSITE" id="PS00651">
    <property type="entry name" value="RIBOSOMAL_L9"/>
    <property type="match status" value="1"/>
</dbReference>
<accession>Q7VV92</accession>
<keyword id="KW-1185">Reference proteome</keyword>
<keyword id="KW-0687">Ribonucleoprotein</keyword>
<keyword id="KW-0689">Ribosomal protein</keyword>
<keyword id="KW-0694">RNA-binding</keyword>
<keyword id="KW-0699">rRNA-binding</keyword>
<sequence>MQIILLEKVANLGNLGEVVRVRDGYARNFLIPQKKARRATDAALKEFEARRAELEKVQAEKLAAAQALAERLNGFQLKISQKAGVDGRLFGSVTNADVAEGLRKAGFEAVEKSQVRMPNGQIKAVGEYLVQAVLHADVVADVVVLVEGEMA</sequence>
<comment type="function">
    <text evidence="1">Binds to the 23S rRNA.</text>
</comment>
<comment type="similarity">
    <text evidence="1">Belongs to the bacterial ribosomal protein bL9 family.</text>
</comment>
<proteinExistence type="inferred from homology"/>
<evidence type="ECO:0000255" key="1">
    <source>
        <dbReference type="HAMAP-Rule" id="MF_00503"/>
    </source>
</evidence>
<evidence type="ECO:0000305" key="2"/>
<organism>
    <name type="scientific">Bordetella pertussis (strain Tohama I / ATCC BAA-589 / NCTC 13251)</name>
    <dbReference type="NCBI Taxonomy" id="257313"/>
    <lineage>
        <taxon>Bacteria</taxon>
        <taxon>Pseudomonadati</taxon>
        <taxon>Pseudomonadota</taxon>
        <taxon>Betaproteobacteria</taxon>
        <taxon>Burkholderiales</taxon>
        <taxon>Alcaligenaceae</taxon>
        <taxon>Bordetella</taxon>
    </lineage>
</organism>
<reference key="1">
    <citation type="journal article" date="2003" name="Nat. Genet.">
        <title>Comparative analysis of the genome sequences of Bordetella pertussis, Bordetella parapertussis and Bordetella bronchiseptica.</title>
        <authorList>
            <person name="Parkhill J."/>
            <person name="Sebaihia M."/>
            <person name="Preston A."/>
            <person name="Murphy L.D."/>
            <person name="Thomson N.R."/>
            <person name="Harris D.E."/>
            <person name="Holden M.T.G."/>
            <person name="Churcher C.M."/>
            <person name="Bentley S.D."/>
            <person name="Mungall K.L."/>
            <person name="Cerdeno-Tarraga A.-M."/>
            <person name="Temple L."/>
            <person name="James K.D."/>
            <person name="Harris B."/>
            <person name="Quail M.A."/>
            <person name="Achtman M."/>
            <person name="Atkin R."/>
            <person name="Baker S."/>
            <person name="Basham D."/>
            <person name="Bason N."/>
            <person name="Cherevach I."/>
            <person name="Chillingworth T."/>
            <person name="Collins M."/>
            <person name="Cronin A."/>
            <person name="Davis P."/>
            <person name="Doggett J."/>
            <person name="Feltwell T."/>
            <person name="Goble A."/>
            <person name="Hamlin N."/>
            <person name="Hauser H."/>
            <person name="Holroyd S."/>
            <person name="Jagels K."/>
            <person name="Leather S."/>
            <person name="Moule S."/>
            <person name="Norberczak H."/>
            <person name="O'Neil S."/>
            <person name="Ormond D."/>
            <person name="Price C."/>
            <person name="Rabbinowitsch E."/>
            <person name="Rutter S."/>
            <person name="Sanders M."/>
            <person name="Saunders D."/>
            <person name="Seeger K."/>
            <person name="Sharp S."/>
            <person name="Simmonds M."/>
            <person name="Skelton J."/>
            <person name="Squares R."/>
            <person name="Squares S."/>
            <person name="Stevens K."/>
            <person name="Unwin L."/>
            <person name="Whitehead S."/>
            <person name="Barrell B.G."/>
            <person name="Maskell D.J."/>
        </authorList>
    </citation>
    <scope>NUCLEOTIDE SEQUENCE [LARGE SCALE GENOMIC DNA]</scope>
    <source>
        <strain>Tohama I / ATCC BAA-589 / NCTC 13251</strain>
    </source>
</reference>
<name>RL9_BORPE</name>
<protein>
    <recommendedName>
        <fullName evidence="1">Large ribosomal subunit protein bL9</fullName>
    </recommendedName>
    <alternativeName>
        <fullName evidence="2">50S ribosomal protein L9</fullName>
    </alternativeName>
</protein>